<protein>
    <recommendedName>
        <fullName evidence="1">tRNA-2-methylthio-N(6)-dimethylallyladenosine synthase</fullName>
        <ecNumber evidence="1">2.8.4.3</ecNumber>
    </recommendedName>
    <alternativeName>
        <fullName evidence="1">(Dimethylallyl)adenosine tRNA methylthiotransferase MiaB</fullName>
    </alternativeName>
    <alternativeName>
        <fullName evidence="1">tRNA-i(6)A37 methylthiotransferase</fullName>
    </alternativeName>
</protein>
<name>MIAB_TRIL1</name>
<sequence length="438" mass="48768">MNHKKLYIDTVGCQMNVNDSERIVTMLQPLGYTQTSRRHEAALILFNTCTVRAGAEECLLQNIANLKNLKRKKPGTLIGVAGCVAQQMGAELLQKFPWVDLVFGTHNLHLVPEMVKDAEAGRRRAETDFLDSSERLDLFPPIEGRKRVSAFVTVMQGCDNFCSYCIVPYVRGREISRRFAEILQEVQDLAAQGLREVVLLGQNVNSYGLKGEEQPSFAELVRAVAAVSGIDRVRFVTSHPKDMSDDLIACFADLAKLCGSLHLPAQAGNNRILKAMNRGYSREHYLETIYKLRQARPEIKITGDMIVGFPGETEAEFEETLSLMEEVRYFDLFSFVYSPRPGTKAAELSDELAKEVKLARLDRLQKLQAVHSRIHNETYVGSTQQVLVEGLAKRHGQVSGRCDSGRIVNLAGSPALIGKLVDVKILEGYANSLLGELL</sequence>
<organism>
    <name type="scientific">Trichlorobacter lovleyi (strain ATCC BAA-1151 / DSM 17278 / SZ)</name>
    <name type="common">Geobacter lovleyi</name>
    <dbReference type="NCBI Taxonomy" id="398767"/>
    <lineage>
        <taxon>Bacteria</taxon>
        <taxon>Pseudomonadati</taxon>
        <taxon>Thermodesulfobacteriota</taxon>
        <taxon>Desulfuromonadia</taxon>
        <taxon>Geobacterales</taxon>
        <taxon>Geobacteraceae</taxon>
        <taxon>Trichlorobacter</taxon>
    </lineage>
</organism>
<dbReference type="EC" id="2.8.4.3" evidence="1"/>
<dbReference type="EMBL" id="CP001089">
    <property type="protein sequence ID" value="ACD95845.1"/>
    <property type="molecule type" value="Genomic_DNA"/>
</dbReference>
<dbReference type="RefSeq" id="WP_012470184.1">
    <property type="nucleotide sequence ID" value="NC_010814.1"/>
</dbReference>
<dbReference type="SMR" id="B3E424"/>
<dbReference type="STRING" id="398767.Glov_2129"/>
<dbReference type="KEGG" id="glo:Glov_2129"/>
<dbReference type="eggNOG" id="COG0621">
    <property type="taxonomic scope" value="Bacteria"/>
</dbReference>
<dbReference type="HOGENOM" id="CLU_018697_2_0_7"/>
<dbReference type="OrthoDB" id="9805215at2"/>
<dbReference type="Proteomes" id="UP000002420">
    <property type="component" value="Chromosome"/>
</dbReference>
<dbReference type="GO" id="GO:0005829">
    <property type="term" value="C:cytosol"/>
    <property type="evidence" value="ECO:0007669"/>
    <property type="project" value="TreeGrafter"/>
</dbReference>
<dbReference type="GO" id="GO:0051539">
    <property type="term" value="F:4 iron, 4 sulfur cluster binding"/>
    <property type="evidence" value="ECO:0007669"/>
    <property type="project" value="UniProtKB-UniRule"/>
</dbReference>
<dbReference type="GO" id="GO:0046872">
    <property type="term" value="F:metal ion binding"/>
    <property type="evidence" value="ECO:0007669"/>
    <property type="project" value="UniProtKB-KW"/>
</dbReference>
<dbReference type="GO" id="GO:0035597">
    <property type="term" value="F:N6-isopentenyladenosine methylthiotransferase activity"/>
    <property type="evidence" value="ECO:0007669"/>
    <property type="project" value="TreeGrafter"/>
</dbReference>
<dbReference type="CDD" id="cd01335">
    <property type="entry name" value="Radical_SAM"/>
    <property type="match status" value="1"/>
</dbReference>
<dbReference type="FunFam" id="3.40.50.12160:FF:000003">
    <property type="entry name" value="CDK5 regulatory subunit-associated protein 1"/>
    <property type="match status" value="1"/>
</dbReference>
<dbReference type="FunFam" id="3.80.30.20:FF:000001">
    <property type="entry name" value="tRNA-2-methylthio-N(6)-dimethylallyladenosine synthase 2"/>
    <property type="match status" value="1"/>
</dbReference>
<dbReference type="Gene3D" id="3.40.50.12160">
    <property type="entry name" value="Methylthiotransferase, N-terminal domain"/>
    <property type="match status" value="1"/>
</dbReference>
<dbReference type="Gene3D" id="3.80.30.20">
    <property type="entry name" value="tm_1862 like domain"/>
    <property type="match status" value="1"/>
</dbReference>
<dbReference type="HAMAP" id="MF_01864">
    <property type="entry name" value="tRNA_metthiotr_MiaB"/>
    <property type="match status" value="1"/>
</dbReference>
<dbReference type="InterPro" id="IPR006638">
    <property type="entry name" value="Elp3/MiaA/NifB-like_rSAM"/>
</dbReference>
<dbReference type="InterPro" id="IPR005839">
    <property type="entry name" value="Methylthiotransferase"/>
</dbReference>
<dbReference type="InterPro" id="IPR020612">
    <property type="entry name" value="Methylthiotransferase_CS"/>
</dbReference>
<dbReference type="InterPro" id="IPR013848">
    <property type="entry name" value="Methylthiotransferase_N"/>
</dbReference>
<dbReference type="InterPro" id="IPR038135">
    <property type="entry name" value="Methylthiotransferase_N_sf"/>
</dbReference>
<dbReference type="InterPro" id="IPR006463">
    <property type="entry name" value="MiaB_methiolase"/>
</dbReference>
<dbReference type="InterPro" id="IPR007197">
    <property type="entry name" value="rSAM"/>
</dbReference>
<dbReference type="InterPro" id="IPR023404">
    <property type="entry name" value="rSAM_horseshoe"/>
</dbReference>
<dbReference type="InterPro" id="IPR002792">
    <property type="entry name" value="TRAM_dom"/>
</dbReference>
<dbReference type="NCBIfam" id="TIGR01574">
    <property type="entry name" value="miaB-methiolase"/>
    <property type="match status" value="1"/>
</dbReference>
<dbReference type="NCBIfam" id="TIGR00089">
    <property type="entry name" value="MiaB/RimO family radical SAM methylthiotransferase"/>
    <property type="match status" value="1"/>
</dbReference>
<dbReference type="PANTHER" id="PTHR43020">
    <property type="entry name" value="CDK5 REGULATORY SUBUNIT-ASSOCIATED PROTEIN 1"/>
    <property type="match status" value="1"/>
</dbReference>
<dbReference type="PANTHER" id="PTHR43020:SF2">
    <property type="entry name" value="MITOCHONDRIAL TRNA METHYLTHIOTRANSFERASE CDK5RAP1"/>
    <property type="match status" value="1"/>
</dbReference>
<dbReference type="Pfam" id="PF04055">
    <property type="entry name" value="Radical_SAM"/>
    <property type="match status" value="1"/>
</dbReference>
<dbReference type="Pfam" id="PF01938">
    <property type="entry name" value="TRAM"/>
    <property type="match status" value="1"/>
</dbReference>
<dbReference type="Pfam" id="PF00919">
    <property type="entry name" value="UPF0004"/>
    <property type="match status" value="1"/>
</dbReference>
<dbReference type="SFLD" id="SFLDF00273">
    <property type="entry name" value="(dimethylallyl)adenosine_tRNA"/>
    <property type="match status" value="1"/>
</dbReference>
<dbReference type="SFLD" id="SFLDG01082">
    <property type="entry name" value="B12-binding_domain_containing"/>
    <property type="match status" value="1"/>
</dbReference>
<dbReference type="SFLD" id="SFLDG01061">
    <property type="entry name" value="methylthiotransferase"/>
    <property type="match status" value="1"/>
</dbReference>
<dbReference type="SMART" id="SM00729">
    <property type="entry name" value="Elp3"/>
    <property type="match status" value="1"/>
</dbReference>
<dbReference type="SUPFAM" id="SSF102114">
    <property type="entry name" value="Radical SAM enzymes"/>
    <property type="match status" value="1"/>
</dbReference>
<dbReference type="PROSITE" id="PS51449">
    <property type="entry name" value="MTTASE_N"/>
    <property type="match status" value="1"/>
</dbReference>
<dbReference type="PROSITE" id="PS01278">
    <property type="entry name" value="MTTASE_RADICAL"/>
    <property type="match status" value="1"/>
</dbReference>
<dbReference type="PROSITE" id="PS51918">
    <property type="entry name" value="RADICAL_SAM"/>
    <property type="match status" value="1"/>
</dbReference>
<dbReference type="PROSITE" id="PS50926">
    <property type="entry name" value="TRAM"/>
    <property type="match status" value="1"/>
</dbReference>
<gene>
    <name evidence="1" type="primary">miaB</name>
    <name type="ordered locus">Glov_2129</name>
</gene>
<reference key="1">
    <citation type="submission" date="2008-05" db="EMBL/GenBank/DDBJ databases">
        <title>Complete sequence of chromosome of Geobacter lovleyi SZ.</title>
        <authorList>
            <consortium name="US DOE Joint Genome Institute"/>
            <person name="Lucas S."/>
            <person name="Copeland A."/>
            <person name="Lapidus A."/>
            <person name="Glavina del Rio T."/>
            <person name="Dalin E."/>
            <person name="Tice H."/>
            <person name="Bruce D."/>
            <person name="Goodwin L."/>
            <person name="Pitluck S."/>
            <person name="Chertkov O."/>
            <person name="Meincke L."/>
            <person name="Brettin T."/>
            <person name="Detter J.C."/>
            <person name="Han C."/>
            <person name="Tapia R."/>
            <person name="Kuske C.R."/>
            <person name="Schmutz J."/>
            <person name="Larimer F."/>
            <person name="Land M."/>
            <person name="Hauser L."/>
            <person name="Kyrpides N."/>
            <person name="Mikhailova N."/>
            <person name="Sung Y."/>
            <person name="Fletcher K.E."/>
            <person name="Ritalahti K.M."/>
            <person name="Loeffler F.E."/>
            <person name="Richardson P."/>
        </authorList>
    </citation>
    <scope>NUCLEOTIDE SEQUENCE [LARGE SCALE GENOMIC DNA]</scope>
    <source>
        <strain>ATCC BAA-1151 / DSM 17278 / SZ</strain>
    </source>
</reference>
<feature type="chain" id="PRO_0000374318" description="tRNA-2-methylthio-N(6)-dimethylallyladenosine synthase">
    <location>
        <begin position="1"/>
        <end position="438"/>
    </location>
</feature>
<feature type="domain" description="MTTase N-terminal" evidence="1">
    <location>
        <begin position="4"/>
        <end position="120"/>
    </location>
</feature>
<feature type="domain" description="Radical SAM core" evidence="2">
    <location>
        <begin position="144"/>
        <end position="377"/>
    </location>
</feature>
<feature type="domain" description="TRAM" evidence="1">
    <location>
        <begin position="377"/>
        <end position="438"/>
    </location>
</feature>
<feature type="binding site" evidence="1">
    <location>
        <position position="13"/>
    </location>
    <ligand>
        <name>[4Fe-4S] cluster</name>
        <dbReference type="ChEBI" id="CHEBI:49883"/>
        <label>1</label>
    </ligand>
</feature>
<feature type="binding site" evidence="1">
    <location>
        <position position="49"/>
    </location>
    <ligand>
        <name>[4Fe-4S] cluster</name>
        <dbReference type="ChEBI" id="CHEBI:49883"/>
        <label>1</label>
    </ligand>
</feature>
<feature type="binding site" evidence="1">
    <location>
        <position position="83"/>
    </location>
    <ligand>
        <name>[4Fe-4S] cluster</name>
        <dbReference type="ChEBI" id="CHEBI:49883"/>
        <label>1</label>
    </ligand>
</feature>
<feature type="binding site" evidence="1">
    <location>
        <position position="158"/>
    </location>
    <ligand>
        <name>[4Fe-4S] cluster</name>
        <dbReference type="ChEBI" id="CHEBI:49883"/>
        <label>2</label>
        <note>4Fe-4S-S-AdoMet</note>
    </ligand>
</feature>
<feature type="binding site" evidence="1">
    <location>
        <position position="162"/>
    </location>
    <ligand>
        <name>[4Fe-4S] cluster</name>
        <dbReference type="ChEBI" id="CHEBI:49883"/>
        <label>2</label>
        <note>4Fe-4S-S-AdoMet</note>
    </ligand>
</feature>
<feature type="binding site" evidence="1">
    <location>
        <position position="165"/>
    </location>
    <ligand>
        <name>[4Fe-4S] cluster</name>
        <dbReference type="ChEBI" id="CHEBI:49883"/>
        <label>2</label>
        <note>4Fe-4S-S-AdoMet</note>
    </ligand>
</feature>
<comment type="function">
    <text evidence="1">Catalyzes the methylthiolation of N6-(dimethylallyl)adenosine (i(6)A), leading to the formation of 2-methylthio-N6-(dimethylallyl)adenosine (ms(2)i(6)A) at position 37 in tRNAs that read codons beginning with uridine.</text>
</comment>
<comment type="catalytic activity">
    <reaction evidence="1">
        <text>N(6)-dimethylallyladenosine(37) in tRNA + (sulfur carrier)-SH + AH2 + 2 S-adenosyl-L-methionine = 2-methylsulfanyl-N(6)-dimethylallyladenosine(37) in tRNA + (sulfur carrier)-H + 5'-deoxyadenosine + L-methionine + A + S-adenosyl-L-homocysteine + 2 H(+)</text>
        <dbReference type="Rhea" id="RHEA:37067"/>
        <dbReference type="Rhea" id="RHEA-COMP:10375"/>
        <dbReference type="Rhea" id="RHEA-COMP:10376"/>
        <dbReference type="Rhea" id="RHEA-COMP:14737"/>
        <dbReference type="Rhea" id="RHEA-COMP:14739"/>
        <dbReference type="ChEBI" id="CHEBI:13193"/>
        <dbReference type="ChEBI" id="CHEBI:15378"/>
        <dbReference type="ChEBI" id="CHEBI:17319"/>
        <dbReference type="ChEBI" id="CHEBI:17499"/>
        <dbReference type="ChEBI" id="CHEBI:29917"/>
        <dbReference type="ChEBI" id="CHEBI:57844"/>
        <dbReference type="ChEBI" id="CHEBI:57856"/>
        <dbReference type="ChEBI" id="CHEBI:59789"/>
        <dbReference type="ChEBI" id="CHEBI:64428"/>
        <dbReference type="ChEBI" id="CHEBI:74415"/>
        <dbReference type="ChEBI" id="CHEBI:74417"/>
        <dbReference type="EC" id="2.8.4.3"/>
    </reaction>
</comment>
<comment type="cofactor">
    <cofactor evidence="1">
        <name>[4Fe-4S] cluster</name>
        <dbReference type="ChEBI" id="CHEBI:49883"/>
    </cofactor>
    <text evidence="1">Binds 2 [4Fe-4S] clusters. One cluster is coordinated with 3 cysteines and an exchangeable S-adenosyl-L-methionine.</text>
</comment>
<comment type="subunit">
    <text evidence="1">Monomer.</text>
</comment>
<comment type="subcellular location">
    <subcellularLocation>
        <location evidence="1">Cytoplasm</location>
    </subcellularLocation>
</comment>
<comment type="similarity">
    <text evidence="1">Belongs to the methylthiotransferase family. MiaB subfamily.</text>
</comment>
<evidence type="ECO:0000255" key="1">
    <source>
        <dbReference type="HAMAP-Rule" id="MF_01864"/>
    </source>
</evidence>
<evidence type="ECO:0000255" key="2">
    <source>
        <dbReference type="PROSITE-ProRule" id="PRU01266"/>
    </source>
</evidence>
<proteinExistence type="inferred from homology"/>
<accession>B3E424</accession>
<keyword id="KW-0004">4Fe-4S</keyword>
<keyword id="KW-0963">Cytoplasm</keyword>
<keyword id="KW-0408">Iron</keyword>
<keyword id="KW-0411">Iron-sulfur</keyword>
<keyword id="KW-0479">Metal-binding</keyword>
<keyword id="KW-1185">Reference proteome</keyword>
<keyword id="KW-0949">S-adenosyl-L-methionine</keyword>
<keyword id="KW-0808">Transferase</keyword>
<keyword id="KW-0819">tRNA processing</keyword>